<evidence type="ECO:0000255" key="1"/>
<evidence type="ECO:0000255" key="2">
    <source>
        <dbReference type="PROSITE-ProRule" id="PRU00174"/>
    </source>
</evidence>
<evidence type="ECO:0000269" key="3">
    <source>
    </source>
</evidence>
<evidence type="ECO:0000305" key="4"/>
<evidence type="ECO:0000305" key="5">
    <source>
    </source>
</evidence>
<organism>
    <name type="scientific">Streptomyces lividans</name>
    <dbReference type="NCBI Taxonomy" id="1916"/>
    <lineage>
        <taxon>Bacteria</taxon>
        <taxon>Bacillati</taxon>
        <taxon>Actinomycetota</taxon>
        <taxon>Actinomycetes</taxon>
        <taxon>Kitasatosporales</taxon>
        <taxon>Streptomycetaceae</taxon>
        <taxon>Streptomyces</taxon>
    </lineage>
</organism>
<comment type="function">
    <text evidence="3">Involved in the degradation of xylan and is a key enzyme in the complete degradation of the plant cell wall. It has a specific arabinofuranose-debranching activity on xylan from gramineae. Acts synergistically with the xylanases and binds specifically to xylan. From small arabinoxylo-oligosides (ranging from arabinoxylotriose to arabinoxylohexaose), it liberates arabinose and, after prolonged incubation, the purified enzyme exhibits some xylanolytic activity as well.</text>
</comment>
<comment type="catalytic activity">
    <reaction evidence="3">
        <text>Hydrolysis of terminal non-reducing alpha-L-arabinofuranoside residues in alpha-L-arabinosides.</text>
        <dbReference type="EC" id="3.2.1.55"/>
    </reaction>
</comment>
<comment type="biophysicochemical properties">
    <kinetics>
        <KM evidence="3">1.17 mM for wheat arabinoxylan (at 55 degrees Celsius)</KM>
        <KM evidence="3">5.12 mM for oat xylan (at 55 degrees Celsius)</KM>
        <Vmax evidence="3">17.2 umol/min/mg enzyme with oat xylan as substrate (at 55 degrees Celsius)</Vmax>
        <Vmax evidence="3">18.5 umol/min/mg enzyme with wheat arabinoxylan as substrate (at 55 degrees Celsius)</Vmax>
    </kinetics>
    <phDependence>
        <text evidence="3">Optimum pH is 6.</text>
    </phDependence>
    <temperatureDependence>
        <text evidence="3">Optimum temperature is 55 degrees Celsius.</text>
    </temperatureDependence>
</comment>
<comment type="pathway">
    <text>Glycan degradation; xylan degradation.</text>
</comment>
<comment type="subcellular location">
    <subcellularLocation>
        <location evidence="3">Secreted</location>
    </subcellularLocation>
</comment>
<comment type="miscellaneous">
    <text evidence="5">These dual activities might be explained by a rotation about the alpha-(1-&gt;3)-glycosidic bond of the arabinofuranose group to the xylose moiety of xylan, which produces a bond conformation resembling that of a beta-(1-&gt;4) bond found in xylosides. Thus a single catalytic site could perform the double activity (PubMed:9148759).</text>
</comment>
<comment type="similarity">
    <text evidence="4">Belongs to the glycosyl hydrolase 62 family.</text>
</comment>
<sequence length="475" mass="50369">MHRGSLSRGQHVRGTRRRGAALAALAALLVATAPAQAAGSGALRGAGSNRCLDVLGGSQDDGALLQLYDCWGGTNQQWTSTDTGRLTVYGDKCLDVPGHATAPGTRVQIWSCSGGRNQQWRVNSDGTVVGVESGLCLEAAGAGTPNGTAVQLWTCNGGGNQKWTGLTGTPPTDGTCALPSTYRWSSTGVLAQPKSGWVALKDFTTVTHNGRHLVYGSTSSGSSYGSMVFSPFTNWSDMASAGQNAMNQAAVAPTLFYFAPKNIWVLAYQWGSWPFIYRTSSDPTDPNGWSAPQPLFTGSISGSDTGPIDQTLIADGQNMYLFFAGDNGKIYRASMPIGNFPGNFGSSYTTIMSDTKANLFEGVQVYKVQGQNQYLMIVEAMGANGRYFRSFTASSLSGSWTPQAASEGNPFAGKANSGATWTNDISHGDLVRDNPDQTMTVDPCNLQFLYQGKAPNAGGHYNSLPWRPGVLTLRH</sequence>
<feature type="signal peptide" evidence="1">
    <location>
        <begin position="1"/>
        <end position="37"/>
    </location>
</feature>
<feature type="chain" id="PRO_0000008037" description="Extracellular exo-alpha-L-arabinofuranosidase">
    <location>
        <begin position="38"/>
        <end position="475"/>
    </location>
</feature>
<feature type="domain" description="Ricin B-type lectin" evidence="2">
    <location>
        <begin position="39"/>
        <end position="166"/>
    </location>
</feature>
<dbReference type="EC" id="3.2.1.55"/>
<dbReference type="EMBL" id="M64551">
    <property type="protein sequence ID" value="AAC26524.1"/>
    <property type="molecule type" value="Genomic_DNA"/>
</dbReference>
<dbReference type="SMR" id="P96463"/>
<dbReference type="CAZy" id="CBM13">
    <property type="family name" value="Carbohydrate-Binding Module Family 13"/>
</dbReference>
<dbReference type="CAZy" id="GH62">
    <property type="family name" value="Glycoside Hydrolase Family 62"/>
</dbReference>
<dbReference type="UniPathway" id="UPA00114"/>
<dbReference type="GO" id="GO:0005576">
    <property type="term" value="C:extracellular region"/>
    <property type="evidence" value="ECO:0007669"/>
    <property type="project" value="UniProtKB-SubCell"/>
</dbReference>
<dbReference type="GO" id="GO:0046556">
    <property type="term" value="F:alpha-L-arabinofuranosidase activity"/>
    <property type="evidence" value="ECO:0007669"/>
    <property type="project" value="UniProtKB-EC"/>
</dbReference>
<dbReference type="GO" id="GO:0030246">
    <property type="term" value="F:carbohydrate binding"/>
    <property type="evidence" value="ECO:0007669"/>
    <property type="project" value="UniProtKB-KW"/>
</dbReference>
<dbReference type="GO" id="GO:0046373">
    <property type="term" value="P:L-arabinose metabolic process"/>
    <property type="evidence" value="ECO:0007669"/>
    <property type="project" value="InterPro"/>
</dbReference>
<dbReference type="GO" id="GO:0045493">
    <property type="term" value="P:xylan catabolic process"/>
    <property type="evidence" value="ECO:0007669"/>
    <property type="project" value="UniProtKB-UniPathway"/>
</dbReference>
<dbReference type="CDD" id="cd23418">
    <property type="entry name" value="beta-trefoil_Ricin_XLN-like"/>
    <property type="match status" value="1"/>
</dbReference>
<dbReference type="CDD" id="cd08987">
    <property type="entry name" value="GH62"/>
    <property type="match status" value="1"/>
</dbReference>
<dbReference type="Gene3D" id="2.80.10.50">
    <property type="match status" value="1"/>
</dbReference>
<dbReference type="Gene3D" id="2.115.10.20">
    <property type="entry name" value="Glycosyl hydrolase domain, family 43"/>
    <property type="match status" value="1"/>
</dbReference>
<dbReference type="InterPro" id="IPR005193">
    <property type="entry name" value="GH62_arabinosidase"/>
</dbReference>
<dbReference type="InterPro" id="IPR023296">
    <property type="entry name" value="Glyco_hydro_beta-prop_sf"/>
</dbReference>
<dbReference type="InterPro" id="IPR035992">
    <property type="entry name" value="Ricin_B-like_lectins"/>
</dbReference>
<dbReference type="InterPro" id="IPR000772">
    <property type="entry name" value="Ricin_B_lectin"/>
</dbReference>
<dbReference type="PANTHER" id="PTHR40631">
    <property type="entry name" value="ALPHA-L-ARABINOFURANOSIDASE AXHA-2-RELATED"/>
    <property type="match status" value="1"/>
</dbReference>
<dbReference type="PANTHER" id="PTHR40631:SF1">
    <property type="entry name" value="ALPHA-L-ARABINOFURANOSIDASE AXHA-2-RELATED"/>
    <property type="match status" value="1"/>
</dbReference>
<dbReference type="Pfam" id="PF03664">
    <property type="entry name" value="Glyco_hydro_62"/>
    <property type="match status" value="1"/>
</dbReference>
<dbReference type="Pfam" id="PF00652">
    <property type="entry name" value="Ricin_B_lectin"/>
    <property type="match status" value="1"/>
</dbReference>
<dbReference type="SMART" id="SM00458">
    <property type="entry name" value="RICIN"/>
    <property type="match status" value="1"/>
</dbReference>
<dbReference type="SUPFAM" id="SSF75005">
    <property type="entry name" value="Arabinanase/levansucrase/invertase"/>
    <property type="match status" value="1"/>
</dbReference>
<dbReference type="SUPFAM" id="SSF50370">
    <property type="entry name" value="Ricin B-like lectins"/>
    <property type="match status" value="1"/>
</dbReference>
<dbReference type="PROSITE" id="PS50231">
    <property type="entry name" value="RICIN_B_LECTIN"/>
    <property type="match status" value="1"/>
</dbReference>
<name>EABF_STRLI</name>
<reference key="1">
    <citation type="journal article" date="1997" name="Biochem. J.">
        <title>New alpha-L-arabinofuranosidase produced by Streptomyces lividans: cloning and DNA sequence of the abfB gene and characterization of the enzyme.</title>
        <authorList>
            <person name="Vincent P."/>
            <person name="Shareck F."/>
            <person name="Dupont C."/>
            <person name="Morosoli R."/>
            <person name="Kluepfel D."/>
        </authorList>
    </citation>
    <scope>NUCLEOTIDE SEQUENCE [GENOMIC DNA]</scope>
    <scope>FUNCTION</scope>
    <scope>CATALYTIC ACTIVITY</scope>
    <scope>BIOPHYSICOCHEMICAL PROPERTIES</scope>
    <scope>SUBCELLULAR LOCATION</scope>
    <scope>SUBSTRATE SPECIFICITY</scope>
    <source>
        <strain>66 / 1326</strain>
    </source>
</reference>
<reference key="2">
    <citation type="submission" date="1998-07" db="EMBL/GenBank/DDBJ databases">
        <authorList>
            <person name="Shareck F."/>
        </authorList>
    </citation>
    <scope>SEQUENCE REVISION</scope>
</reference>
<keyword id="KW-0119">Carbohydrate metabolism</keyword>
<keyword id="KW-0326">Glycosidase</keyword>
<keyword id="KW-0378">Hydrolase</keyword>
<keyword id="KW-0430">Lectin</keyword>
<keyword id="KW-0624">Polysaccharide degradation</keyword>
<keyword id="KW-0964">Secreted</keyword>
<keyword id="KW-0732">Signal</keyword>
<keyword id="KW-0858">Xylan degradation</keyword>
<accession>P96463</accession>
<protein>
    <recommendedName>
        <fullName>Extracellular exo-alpha-L-arabinofuranosidase</fullName>
        <shortName>ABF</shortName>
        <ecNumber>3.2.1.55</ecNumber>
    </recommendedName>
    <alternativeName>
        <fullName>Arabinosidase</fullName>
    </alternativeName>
    <alternativeName>
        <fullName>Arabinoxylan arabinofuranohydrolase</fullName>
    </alternativeName>
</protein>
<proteinExistence type="evidence at protein level"/>
<gene>
    <name type="primary">abfB</name>
</gene>